<evidence type="ECO:0000255" key="1">
    <source>
        <dbReference type="HAMAP-Rule" id="MF_01026"/>
    </source>
</evidence>
<organism>
    <name type="scientific">Shewanella baltica (strain OS185)</name>
    <dbReference type="NCBI Taxonomy" id="402882"/>
    <lineage>
        <taxon>Bacteria</taxon>
        <taxon>Pseudomonadati</taxon>
        <taxon>Pseudomonadota</taxon>
        <taxon>Gammaproteobacteria</taxon>
        <taxon>Alteromonadales</taxon>
        <taxon>Shewanellaceae</taxon>
        <taxon>Shewanella</taxon>
    </lineage>
</organism>
<sequence>MTNAKTLYQKVWDAHIVAAPEGEAPVIYVDRHLVHEVTSPQAFSGLKVAGRKLRAPEKTFATMDHNTSTRSASLDALSPMARTQVETLAQNCKDFGVRLYDIHHPNQGIVHVMGPELGITLPGTVIVCGDSHTATHGAFGALAFGIGTSEVEHVLATQTLRQLKAKTMKIEVRGHVTDGVTAKDIVLAIIGKIGMDGGTGYVVEFCGEAIEALSMEGRMTVCNMAIEMGAKAGMVAPDQTTFDYLAGREFAPKGEDWAEAVAYWKAIKTDDGAVFDAIVELDAADIAPQLTWGTNPGQVVAIDGKVPDPINEANPSTRASMEKALEYIGLSAGTPMTDISINKVFIGSCTNSRIEDLRSAAVHAKGRKVASGVTAIVVPGSGQVKAQAEAEGLDKIFIEAGFEWRLPGCSMCLAMNDDRLEAGDRCASTSNRNFEGRQGRGSRTHLVSPAMAAAAAVAGHFVDIRKPY</sequence>
<proteinExistence type="inferred from homology"/>
<accession>A6WIB7</accession>
<comment type="function">
    <text evidence="1">Catalyzes the isomerization between 2-isopropylmalate and 3-isopropylmalate, via the formation of 2-isopropylmaleate.</text>
</comment>
<comment type="catalytic activity">
    <reaction evidence="1">
        <text>(2R,3S)-3-isopropylmalate = (2S)-2-isopropylmalate</text>
        <dbReference type="Rhea" id="RHEA:32287"/>
        <dbReference type="ChEBI" id="CHEBI:1178"/>
        <dbReference type="ChEBI" id="CHEBI:35121"/>
        <dbReference type="EC" id="4.2.1.33"/>
    </reaction>
</comment>
<comment type="cofactor">
    <cofactor evidence="1">
        <name>[4Fe-4S] cluster</name>
        <dbReference type="ChEBI" id="CHEBI:49883"/>
    </cofactor>
    <text evidence="1">Binds 1 [4Fe-4S] cluster per subunit.</text>
</comment>
<comment type="pathway">
    <text evidence="1">Amino-acid biosynthesis; L-leucine biosynthesis; L-leucine from 3-methyl-2-oxobutanoate: step 2/4.</text>
</comment>
<comment type="subunit">
    <text evidence="1">Heterodimer of LeuC and LeuD.</text>
</comment>
<comment type="similarity">
    <text evidence="1">Belongs to the aconitase/IPM isomerase family. LeuC type 1 subfamily.</text>
</comment>
<feature type="chain" id="PRO_0000319839" description="3-isopropylmalate dehydratase large subunit">
    <location>
        <begin position="1"/>
        <end position="468"/>
    </location>
</feature>
<feature type="binding site" evidence="1">
    <location>
        <position position="349"/>
    </location>
    <ligand>
        <name>[4Fe-4S] cluster</name>
        <dbReference type="ChEBI" id="CHEBI:49883"/>
    </ligand>
</feature>
<feature type="binding site" evidence="1">
    <location>
        <position position="409"/>
    </location>
    <ligand>
        <name>[4Fe-4S] cluster</name>
        <dbReference type="ChEBI" id="CHEBI:49883"/>
    </ligand>
</feature>
<feature type="binding site" evidence="1">
    <location>
        <position position="412"/>
    </location>
    <ligand>
        <name>[4Fe-4S] cluster</name>
        <dbReference type="ChEBI" id="CHEBI:49883"/>
    </ligand>
</feature>
<reference key="1">
    <citation type="submission" date="2007-07" db="EMBL/GenBank/DDBJ databases">
        <title>Complete sequence of chromosome of Shewanella baltica OS185.</title>
        <authorList>
            <consortium name="US DOE Joint Genome Institute"/>
            <person name="Copeland A."/>
            <person name="Lucas S."/>
            <person name="Lapidus A."/>
            <person name="Barry K."/>
            <person name="Glavina del Rio T."/>
            <person name="Dalin E."/>
            <person name="Tice H."/>
            <person name="Pitluck S."/>
            <person name="Sims D."/>
            <person name="Brettin T."/>
            <person name="Bruce D."/>
            <person name="Detter J.C."/>
            <person name="Han C."/>
            <person name="Schmutz J."/>
            <person name="Larimer F."/>
            <person name="Land M."/>
            <person name="Hauser L."/>
            <person name="Kyrpides N."/>
            <person name="Mikhailova N."/>
            <person name="Brettar I."/>
            <person name="Rodrigues J."/>
            <person name="Konstantinidis K."/>
            <person name="Tiedje J."/>
            <person name="Richardson P."/>
        </authorList>
    </citation>
    <scope>NUCLEOTIDE SEQUENCE [LARGE SCALE GENOMIC DNA]</scope>
    <source>
        <strain>OS185</strain>
    </source>
</reference>
<gene>
    <name evidence="1" type="primary">leuC</name>
    <name type="ordered locus">Shew185_0387</name>
</gene>
<protein>
    <recommendedName>
        <fullName evidence="1">3-isopropylmalate dehydratase large subunit</fullName>
        <ecNumber evidence="1">4.2.1.33</ecNumber>
    </recommendedName>
    <alternativeName>
        <fullName evidence="1">Alpha-IPM isomerase</fullName>
        <shortName evidence="1">IPMI</shortName>
    </alternativeName>
    <alternativeName>
        <fullName evidence="1">Isopropylmalate isomerase</fullName>
    </alternativeName>
</protein>
<keyword id="KW-0004">4Fe-4S</keyword>
<keyword id="KW-0028">Amino-acid biosynthesis</keyword>
<keyword id="KW-0100">Branched-chain amino acid biosynthesis</keyword>
<keyword id="KW-0408">Iron</keyword>
<keyword id="KW-0411">Iron-sulfur</keyword>
<keyword id="KW-0432">Leucine biosynthesis</keyword>
<keyword id="KW-0456">Lyase</keyword>
<keyword id="KW-0479">Metal-binding</keyword>
<dbReference type="EC" id="4.2.1.33" evidence="1"/>
<dbReference type="EMBL" id="CP000753">
    <property type="protein sequence ID" value="ABS06556.1"/>
    <property type="molecule type" value="Genomic_DNA"/>
</dbReference>
<dbReference type="RefSeq" id="WP_006086688.1">
    <property type="nucleotide sequence ID" value="NC_009665.1"/>
</dbReference>
<dbReference type="SMR" id="A6WIB7"/>
<dbReference type="GeneID" id="11770738"/>
<dbReference type="KEGG" id="sbm:Shew185_0387"/>
<dbReference type="HOGENOM" id="CLU_006714_3_4_6"/>
<dbReference type="UniPathway" id="UPA00048">
    <property type="reaction ID" value="UER00071"/>
</dbReference>
<dbReference type="GO" id="GO:0003861">
    <property type="term" value="F:3-isopropylmalate dehydratase activity"/>
    <property type="evidence" value="ECO:0007669"/>
    <property type="project" value="UniProtKB-UniRule"/>
</dbReference>
<dbReference type="GO" id="GO:0051539">
    <property type="term" value="F:4 iron, 4 sulfur cluster binding"/>
    <property type="evidence" value="ECO:0007669"/>
    <property type="project" value="UniProtKB-KW"/>
</dbReference>
<dbReference type="GO" id="GO:0046872">
    <property type="term" value="F:metal ion binding"/>
    <property type="evidence" value="ECO:0007669"/>
    <property type="project" value="UniProtKB-KW"/>
</dbReference>
<dbReference type="GO" id="GO:0009098">
    <property type="term" value="P:L-leucine biosynthetic process"/>
    <property type="evidence" value="ECO:0007669"/>
    <property type="project" value="UniProtKB-UniRule"/>
</dbReference>
<dbReference type="CDD" id="cd01583">
    <property type="entry name" value="IPMI"/>
    <property type="match status" value="1"/>
</dbReference>
<dbReference type="FunFam" id="3.30.499.10:FF:000006">
    <property type="entry name" value="3-isopropylmalate dehydratase large subunit"/>
    <property type="match status" value="1"/>
</dbReference>
<dbReference type="FunFam" id="3.30.499.10:FF:000007">
    <property type="entry name" value="3-isopropylmalate dehydratase large subunit"/>
    <property type="match status" value="1"/>
</dbReference>
<dbReference type="Gene3D" id="3.30.499.10">
    <property type="entry name" value="Aconitase, domain 3"/>
    <property type="match status" value="2"/>
</dbReference>
<dbReference type="HAMAP" id="MF_01026">
    <property type="entry name" value="LeuC_type1"/>
    <property type="match status" value="1"/>
</dbReference>
<dbReference type="InterPro" id="IPR004430">
    <property type="entry name" value="3-IsopropMal_deHydase_lsu"/>
</dbReference>
<dbReference type="InterPro" id="IPR015931">
    <property type="entry name" value="Acnase/IPM_dHydase_lsu_aba_1/3"/>
</dbReference>
<dbReference type="InterPro" id="IPR001030">
    <property type="entry name" value="Acoase/IPM_deHydtase_lsu_aba"/>
</dbReference>
<dbReference type="InterPro" id="IPR018136">
    <property type="entry name" value="Aconitase_4Fe-4S_BS"/>
</dbReference>
<dbReference type="InterPro" id="IPR036008">
    <property type="entry name" value="Aconitase_4Fe-4S_dom"/>
</dbReference>
<dbReference type="InterPro" id="IPR050067">
    <property type="entry name" value="IPM_dehydratase_rel_enz"/>
</dbReference>
<dbReference type="InterPro" id="IPR033941">
    <property type="entry name" value="IPMI_cat"/>
</dbReference>
<dbReference type="NCBIfam" id="TIGR00170">
    <property type="entry name" value="leuC"/>
    <property type="match status" value="1"/>
</dbReference>
<dbReference type="NCBIfam" id="NF004016">
    <property type="entry name" value="PRK05478.1"/>
    <property type="match status" value="1"/>
</dbReference>
<dbReference type="NCBIfam" id="NF009116">
    <property type="entry name" value="PRK12466.1"/>
    <property type="match status" value="1"/>
</dbReference>
<dbReference type="PANTHER" id="PTHR43822:SF9">
    <property type="entry name" value="3-ISOPROPYLMALATE DEHYDRATASE"/>
    <property type="match status" value="1"/>
</dbReference>
<dbReference type="PANTHER" id="PTHR43822">
    <property type="entry name" value="HOMOACONITASE, MITOCHONDRIAL-RELATED"/>
    <property type="match status" value="1"/>
</dbReference>
<dbReference type="Pfam" id="PF00330">
    <property type="entry name" value="Aconitase"/>
    <property type="match status" value="1"/>
</dbReference>
<dbReference type="PRINTS" id="PR00415">
    <property type="entry name" value="ACONITASE"/>
</dbReference>
<dbReference type="SUPFAM" id="SSF53732">
    <property type="entry name" value="Aconitase iron-sulfur domain"/>
    <property type="match status" value="1"/>
</dbReference>
<dbReference type="PROSITE" id="PS00450">
    <property type="entry name" value="ACONITASE_1"/>
    <property type="match status" value="1"/>
</dbReference>
<dbReference type="PROSITE" id="PS01244">
    <property type="entry name" value="ACONITASE_2"/>
    <property type="match status" value="1"/>
</dbReference>
<name>LEUC_SHEB8</name>